<protein>
    <recommendedName>
        <fullName>Probable phosphatase phospho1</fullName>
        <ecNumber evidence="2">3.1.3.75</ecNumber>
    </recommendedName>
</protein>
<sequence length="279" mass="31403">MRDSVFNCCVSPPHPPGAAAAERRSRSPAPQNHSRFLMFFDFDETLVDECSDDSMVSAAPGGVLPGWLKDTYRPGRYNEYMQRVLAYLSEQGVTPAAIRATVEKLPPCPGIPALMHFLLSQPSRDFEVVCVSDANTVFIETWLQHMGFQPLFLRIFTNPAHFDDNGVLQLRPFHSHECLRCPANMCKAVVVRQYVAQRIRERGGRPYQKVLYMGDGANDFCPSLTLSPGDVAFPRRDFPMHKLIQEMGEAKPGEFKASVVPWKSGEDVVNTLRKILERT</sequence>
<reference key="1">
    <citation type="submission" date="2004-07" db="EMBL/GenBank/DDBJ databases">
        <authorList>
            <consortium name="NIH - Zebrafish Gene Collection (ZGC) project"/>
        </authorList>
    </citation>
    <scope>NUCLEOTIDE SEQUENCE [LARGE SCALE MRNA]</scope>
</reference>
<gene>
    <name type="primary">phospho1</name>
    <name type="ORF">zgc:92423</name>
</gene>
<keyword id="KW-0378">Hydrolase</keyword>
<keyword id="KW-0460">Magnesium</keyword>
<keyword id="KW-0479">Metal-binding</keyword>
<keyword id="KW-0495">Mineral balance</keyword>
<keyword id="KW-1185">Reference proteome</keyword>
<evidence type="ECO:0000250" key="1">
    <source>
        <dbReference type="UniProtKB" id="Q8R2H9"/>
    </source>
</evidence>
<evidence type="ECO:0000250" key="2">
    <source>
        <dbReference type="UniProtKB" id="Q8TCT1"/>
    </source>
</evidence>
<evidence type="ECO:0000250" key="3">
    <source>
        <dbReference type="UniProtKB" id="Q96GD0"/>
    </source>
</evidence>
<evidence type="ECO:0000305" key="4"/>
<name>PHOP1_DANRE</name>
<feature type="chain" id="PRO_0000068832" description="Probable phosphatase phospho1">
    <location>
        <begin position="1"/>
        <end position="279"/>
    </location>
</feature>
<feature type="active site" description="Nucleophile" evidence="2">
    <location>
        <position position="41"/>
    </location>
</feature>
<feature type="active site" description="Proton donor" evidence="3">
    <location>
        <position position="43"/>
    </location>
</feature>
<feature type="binding site" evidence="3">
    <location>
        <position position="41"/>
    </location>
    <ligand>
        <name>Mg(2+)</name>
        <dbReference type="ChEBI" id="CHEBI:18420"/>
    </ligand>
</feature>
<feature type="binding site" evidence="3">
    <location>
        <position position="43"/>
    </location>
    <ligand>
        <name>Mg(2+)</name>
        <dbReference type="ChEBI" id="CHEBI:18420"/>
    </ligand>
</feature>
<feature type="binding site" evidence="2">
    <location>
        <position position="52"/>
    </location>
    <ligand>
        <name>substrate</name>
    </ligand>
</feature>
<feature type="binding site" evidence="2">
    <location>
        <position position="133"/>
    </location>
    <ligand>
        <name>substrate</name>
    </ligand>
</feature>
<feature type="binding site" evidence="3">
    <location>
        <position position="215"/>
    </location>
    <ligand>
        <name>Mg(2+)</name>
        <dbReference type="ChEBI" id="CHEBI:18420"/>
    </ligand>
</feature>
<accession>Q6DBV4</accession>
<dbReference type="EC" id="3.1.3.75" evidence="2"/>
<dbReference type="EMBL" id="BC078347">
    <property type="protein sequence ID" value="AAH78347.1"/>
    <property type="molecule type" value="mRNA"/>
</dbReference>
<dbReference type="RefSeq" id="NP_001003461.1">
    <property type="nucleotide sequence ID" value="NM_001003461.1"/>
</dbReference>
<dbReference type="FunCoup" id="Q6DBV4">
    <property type="interactions" value="303"/>
</dbReference>
<dbReference type="STRING" id="7955.ENSDARP00000055833"/>
<dbReference type="PaxDb" id="7955-ENSDARP00000055833"/>
<dbReference type="GeneID" id="100002812"/>
<dbReference type="KEGG" id="dre:100002812"/>
<dbReference type="AGR" id="ZFIN:ZDB-GENE-040801-198"/>
<dbReference type="CTD" id="162466"/>
<dbReference type="ZFIN" id="ZDB-GENE-040801-198">
    <property type="gene designation" value="phospho1"/>
</dbReference>
<dbReference type="eggNOG" id="KOG3120">
    <property type="taxonomic scope" value="Eukaryota"/>
</dbReference>
<dbReference type="InParanoid" id="Q6DBV4"/>
<dbReference type="OrthoDB" id="10267182at2759"/>
<dbReference type="PhylomeDB" id="Q6DBV4"/>
<dbReference type="Reactome" id="R-DRE-1483191">
    <property type="pathway name" value="Synthesis of PC"/>
</dbReference>
<dbReference type="Reactome" id="R-DRE-1483213">
    <property type="pathway name" value="Synthesis of PE"/>
</dbReference>
<dbReference type="PRO" id="PR:Q6DBV4"/>
<dbReference type="Proteomes" id="UP000000437">
    <property type="component" value="Chromosome 3"/>
</dbReference>
<dbReference type="GO" id="GO:0065010">
    <property type="term" value="C:extracellular membrane-bounded organelle"/>
    <property type="evidence" value="ECO:0000250"/>
    <property type="project" value="UniProtKB"/>
</dbReference>
<dbReference type="GO" id="GO:0046872">
    <property type="term" value="F:metal ion binding"/>
    <property type="evidence" value="ECO:0007669"/>
    <property type="project" value="UniProtKB-KW"/>
</dbReference>
<dbReference type="GO" id="GO:0016791">
    <property type="term" value="F:phosphatase activity"/>
    <property type="evidence" value="ECO:0000318"/>
    <property type="project" value="GO_Central"/>
</dbReference>
<dbReference type="GO" id="GO:0052731">
    <property type="term" value="F:phosphocholine phosphatase activity"/>
    <property type="evidence" value="ECO:0000250"/>
    <property type="project" value="UniProtKB"/>
</dbReference>
<dbReference type="GO" id="GO:0052732">
    <property type="term" value="F:phosphoethanolamine phosphatase activity"/>
    <property type="evidence" value="ECO:0000250"/>
    <property type="project" value="UniProtKB"/>
</dbReference>
<dbReference type="GO" id="GO:0030282">
    <property type="term" value="P:bone mineralization"/>
    <property type="evidence" value="ECO:0000250"/>
    <property type="project" value="UniProtKB"/>
</dbReference>
<dbReference type="GO" id="GO:0030500">
    <property type="term" value="P:regulation of bone mineralization"/>
    <property type="evidence" value="ECO:0007669"/>
    <property type="project" value="UniProtKB-KW"/>
</dbReference>
<dbReference type="CDD" id="cd16418">
    <property type="entry name" value="HAD_Pase"/>
    <property type="match status" value="1"/>
</dbReference>
<dbReference type="Gene3D" id="3.40.50.1000">
    <property type="entry name" value="HAD superfamily/HAD-like"/>
    <property type="match status" value="1"/>
</dbReference>
<dbReference type="InterPro" id="IPR036412">
    <property type="entry name" value="HAD-like_sf"/>
</dbReference>
<dbReference type="InterPro" id="IPR006384">
    <property type="entry name" value="HAD_hydro_PyrdxlP_Pase-like"/>
</dbReference>
<dbReference type="InterPro" id="IPR023214">
    <property type="entry name" value="HAD_sf"/>
</dbReference>
<dbReference type="InterPro" id="IPR016965">
    <property type="entry name" value="Pase_PHOSPHO-typ"/>
</dbReference>
<dbReference type="NCBIfam" id="TIGR01489">
    <property type="entry name" value="DKMTPPase-SF"/>
    <property type="match status" value="1"/>
</dbReference>
<dbReference type="NCBIfam" id="TIGR01488">
    <property type="entry name" value="HAD-SF-IB"/>
    <property type="match status" value="1"/>
</dbReference>
<dbReference type="PANTHER" id="PTHR20889">
    <property type="entry name" value="PHOSPHATASE, ORPHAN 1, 2"/>
    <property type="match status" value="1"/>
</dbReference>
<dbReference type="PANTHER" id="PTHR20889:SF2">
    <property type="entry name" value="PHOSPHOETHANOLAMINE_PHOSPHOCHOLINE PHOSPHATASE"/>
    <property type="match status" value="1"/>
</dbReference>
<dbReference type="Pfam" id="PF06888">
    <property type="entry name" value="Put_Phosphatase"/>
    <property type="match status" value="1"/>
</dbReference>
<dbReference type="PIRSF" id="PIRSF031051">
    <property type="entry name" value="PyrdxlP_Pase_PHOSPHO2"/>
    <property type="match status" value="1"/>
</dbReference>
<dbReference type="SUPFAM" id="SSF56784">
    <property type="entry name" value="HAD-like"/>
    <property type="match status" value="1"/>
</dbReference>
<proteinExistence type="evidence at transcript level"/>
<organism>
    <name type="scientific">Danio rerio</name>
    <name type="common">Zebrafish</name>
    <name type="synonym">Brachydanio rerio</name>
    <dbReference type="NCBI Taxonomy" id="7955"/>
    <lineage>
        <taxon>Eukaryota</taxon>
        <taxon>Metazoa</taxon>
        <taxon>Chordata</taxon>
        <taxon>Craniata</taxon>
        <taxon>Vertebrata</taxon>
        <taxon>Euteleostomi</taxon>
        <taxon>Actinopterygii</taxon>
        <taxon>Neopterygii</taxon>
        <taxon>Teleostei</taxon>
        <taxon>Ostariophysi</taxon>
        <taxon>Cypriniformes</taxon>
        <taxon>Danionidae</taxon>
        <taxon>Danioninae</taxon>
        <taxon>Danio</taxon>
    </lineage>
</organism>
<comment type="function">
    <text evidence="2">Phosphatase that has a high activity toward phosphoethanolamine (PEA) and phosphocholine (PCho). Involved in the generation of inorganic phosphate for bone mineralization.</text>
</comment>
<comment type="catalytic activity">
    <reaction evidence="2">
        <text>phosphoethanolamine + H2O = ethanolamine + phosphate</text>
        <dbReference type="Rhea" id="RHEA:16089"/>
        <dbReference type="ChEBI" id="CHEBI:15377"/>
        <dbReference type="ChEBI" id="CHEBI:43474"/>
        <dbReference type="ChEBI" id="CHEBI:57603"/>
        <dbReference type="ChEBI" id="CHEBI:58190"/>
        <dbReference type="EC" id="3.1.3.75"/>
    </reaction>
</comment>
<comment type="catalytic activity">
    <reaction evidence="2">
        <text>phosphocholine + H2O = choline + phosphate</text>
        <dbReference type="Rhea" id="RHEA:10492"/>
        <dbReference type="ChEBI" id="CHEBI:15354"/>
        <dbReference type="ChEBI" id="CHEBI:15377"/>
        <dbReference type="ChEBI" id="CHEBI:43474"/>
        <dbReference type="ChEBI" id="CHEBI:295975"/>
        <dbReference type="EC" id="3.1.3.75"/>
    </reaction>
</comment>
<comment type="cofactor">
    <cofactor evidence="2">
        <name>Mg(2+)</name>
        <dbReference type="ChEBI" id="CHEBI:18420"/>
    </cofactor>
</comment>
<comment type="subcellular location">
    <subcellularLocation>
        <location evidence="1">Extracellular vesicle</location>
    </subcellularLocation>
    <text evidence="1">Localizes to special class of extracellular vesicles, named matrix vesicles (MVs), which are released by osteogenic cells.</text>
</comment>
<comment type="similarity">
    <text evidence="4">Belongs to the HAD-like hydrolase superfamily. PHOSPHO family.</text>
</comment>